<sequence length="282" mass="31431">MATYLIGDVHGCYDELIALLQQVEFTPDTDTLWLTGDLVARGPGSLDVLRYVKSLGNSVRLVLGNHDLHLLAVFAGISRNKPKDRLTPLLEAPDADELLNWLRRQPLLQVDEEKKLVMAHAGITPQWDLQTAKECARDVEAVLSSDSYPFFLDAMYGDMPNNWSPELSGLARLRFITNAFTRMRYCFPNGQLDMYSKASPENAPAPLKPWFAIPGPVSEAYSIAFGHWASLEGKGTPEGIYALDTGCCWGGELTCLRWEDKQYFVQPSNRQMDMGEGEAVNA</sequence>
<evidence type="ECO:0000250" key="1"/>
<evidence type="ECO:0000305" key="2"/>
<proteinExistence type="inferred from homology"/>
<accession>P0A1B2</accession>
<accession>Q56018</accession>
<keyword id="KW-0378">Hydrolase</keyword>
<reference key="1">
    <citation type="journal article" date="2001" name="Nature">
        <title>Complete genome sequence of a multiple drug resistant Salmonella enterica serovar Typhi CT18.</title>
        <authorList>
            <person name="Parkhill J."/>
            <person name="Dougan G."/>
            <person name="James K.D."/>
            <person name="Thomson N.R."/>
            <person name="Pickard D."/>
            <person name="Wain J."/>
            <person name="Churcher C.M."/>
            <person name="Mungall K.L."/>
            <person name="Bentley S.D."/>
            <person name="Holden M.T.G."/>
            <person name="Sebaihia M."/>
            <person name="Baker S."/>
            <person name="Basham D."/>
            <person name="Brooks K."/>
            <person name="Chillingworth T."/>
            <person name="Connerton P."/>
            <person name="Cronin A."/>
            <person name="Davis P."/>
            <person name="Davies R.M."/>
            <person name="Dowd L."/>
            <person name="White N."/>
            <person name="Farrar J."/>
            <person name="Feltwell T."/>
            <person name="Hamlin N."/>
            <person name="Haque A."/>
            <person name="Hien T.T."/>
            <person name="Holroyd S."/>
            <person name="Jagels K."/>
            <person name="Krogh A."/>
            <person name="Larsen T.S."/>
            <person name="Leather S."/>
            <person name="Moule S."/>
            <person name="O'Gaora P."/>
            <person name="Parry C."/>
            <person name="Quail M.A."/>
            <person name="Rutherford K.M."/>
            <person name="Simmonds M."/>
            <person name="Skelton J."/>
            <person name="Stevens K."/>
            <person name="Whitehead S."/>
            <person name="Barrell B.G."/>
        </authorList>
    </citation>
    <scope>NUCLEOTIDE SEQUENCE [LARGE SCALE GENOMIC DNA]</scope>
    <source>
        <strain>CT18</strain>
    </source>
</reference>
<reference key="2">
    <citation type="journal article" date="2003" name="J. Bacteriol.">
        <title>Comparative genomics of Salmonella enterica serovar Typhi strains Ty2 and CT18.</title>
        <authorList>
            <person name="Deng W."/>
            <person name="Liou S.-R."/>
            <person name="Plunkett G. III"/>
            <person name="Mayhew G.F."/>
            <person name="Rose D.J."/>
            <person name="Burland V."/>
            <person name="Kodoyianni V."/>
            <person name="Schwartz D.C."/>
            <person name="Blattner F.R."/>
        </authorList>
    </citation>
    <scope>NUCLEOTIDE SEQUENCE [LARGE SCALE GENOMIC DNA]</scope>
    <source>
        <strain>ATCC 700931 / Ty2</strain>
    </source>
</reference>
<name>APAH_SALTI</name>
<dbReference type="EC" id="3.6.1.41"/>
<dbReference type="EMBL" id="AL513382">
    <property type="protein sequence ID" value="CAD01244.1"/>
    <property type="molecule type" value="Genomic_DNA"/>
</dbReference>
<dbReference type="EMBL" id="AE014613">
    <property type="protein sequence ID" value="AAO67824.1"/>
    <property type="molecule type" value="Genomic_DNA"/>
</dbReference>
<dbReference type="RefSeq" id="NP_454700.1">
    <property type="nucleotide sequence ID" value="NC_003198.1"/>
</dbReference>
<dbReference type="RefSeq" id="WP_000257211.1">
    <property type="nucleotide sequence ID" value="NZ_WSUR01000028.1"/>
</dbReference>
<dbReference type="SMR" id="P0A1B2"/>
<dbReference type="STRING" id="220341.gene:17584146"/>
<dbReference type="KEGG" id="stt:t0091"/>
<dbReference type="KEGG" id="sty:STY0103"/>
<dbReference type="PATRIC" id="fig|220341.7.peg.102"/>
<dbReference type="eggNOG" id="COG0639">
    <property type="taxonomic scope" value="Bacteria"/>
</dbReference>
<dbReference type="HOGENOM" id="CLU_056184_2_0_6"/>
<dbReference type="OMA" id="INAFTRM"/>
<dbReference type="Proteomes" id="UP000000541">
    <property type="component" value="Chromosome"/>
</dbReference>
<dbReference type="Proteomes" id="UP000002670">
    <property type="component" value="Chromosome"/>
</dbReference>
<dbReference type="GO" id="GO:0008803">
    <property type="term" value="F:bis(5'-nucleosyl)-tetraphosphatase (symmetrical) activity"/>
    <property type="evidence" value="ECO:0007669"/>
    <property type="project" value="UniProtKB-UniRule"/>
</dbReference>
<dbReference type="CDD" id="cd07422">
    <property type="entry name" value="MPP_ApaH"/>
    <property type="match status" value="1"/>
</dbReference>
<dbReference type="FunFam" id="3.60.21.10:FF:000013">
    <property type="entry name" value="Bis(5'-nucleosyl)-tetraphosphatase, symmetrical"/>
    <property type="match status" value="1"/>
</dbReference>
<dbReference type="Gene3D" id="3.60.21.10">
    <property type="match status" value="1"/>
</dbReference>
<dbReference type="HAMAP" id="MF_00199">
    <property type="entry name" value="ApaH"/>
    <property type="match status" value="1"/>
</dbReference>
<dbReference type="InterPro" id="IPR004617">
    <property type="entry name" value="ApaH"/>
</dbReference>
<dbReference type="InterPro" id="IPR004843">
    <property type="entry name" value="Calcineurin-like_PHP_ApaH"/>
</dbReference>
<dbReference type="InterPro" id="IPR029052">
    <property type="entry name" value="Metallo-depent_PP-like"/>
</dbReference>
<dbReference type="NCBIfam" id="TIGR00668">
    <property type="entry name" value="apaH"/>
    <property type="match status" value="1"/>
</dbReference>
<dbReference type="NCBIfam" id="NF001204">
    <property type="entry name" value="PRK00166.1"/>
    <property type="match status" value="1"/>
</dbReference>
<dbReference type="PANTHER" id="PTHR40942">
    <property type="match status" value="1"/>
</dbReference>
<dbReference type="PANTHER" id="PTHR40942:SF4">
    <property type="entry name" value="CYTOCHROME C5"/>
    <property type="match status" value="1"/>
</dbReference>
<dbReference type="Pfam" id="PF00149">
    <property type="entry name" value="Metallophos"/>
    <property type="match status" value="1"/>
</dbReference>
<dbReference type="PIRSF" id="PIRSF000903">
    <property type="entry name" value="B5n-ttraPtase_sm"/>
    <property type="match status" value="1"/>
</dbReference>
<dbReference type="SUPFAM" id="SSF56300">
    <property type="entry name" value="Metallo-dependent phosphatases"/>
    <property type="match status" value="1"/>
</dbReference>
<comment type="function">
    <text evidence="1">Hydrolyzes diadenosine 5',5'''-P1,P4-tetraphosphate to yield ADP.</text>
</comment>
<comment type="catalytic activity">
    <reaction>
        <text>P(1),P(4)-bis(5'-adenosyl) tetraphosphate + H2O = 2 ADP + 2 H(+)</text>
        <dbReference type="Rhea" id="RHEA:24252"/>
        <dbReference type="ChEBI" id="CHEBI:15377"/>
        <dbReference type="ChEBI" id="CHEBI:15378"/>
        <dbReference type="ChEBI" id="CHEBI:58141"/>
        <dbReference type="ChEBI" id="CHEBI:456216"/>
        <dbReference type="EC" id="3.6.1.41"/>
    </reaction>
</comment>
<comment type="similarity">
    <text evidence="2">Belongs to the Ap4A hydrolase family.</text>
</comment>
<feature type="chain" id="PRO_0000198008" description="Bis(5'-nucleosyl)-tetraphosphatase, symmetrical">
    <location>
        <begin position="1"/>
        <end position="282"/>
    </location>
</feature>
<protein>
    <recommendedName>
        <fullName>Bis(5'-nucleosyl)-tetraphosphatase, symmetrical</fullName>
        <ecNumber>3.6.1.41</ecNumber>
    </recommendedName>
    <alternativeName>
        <fullName>Ap4A hydrolase</fullName>
    </alternativeName>
    <alternativeName>
        <fullName>Diadenosine 5',5'''-P1,P4-tetraphosphate pyrophosphohydrolase</fullName>
    </alternativeName>
    <alternativeName>
        <fullName>Diadenosine tetraphosphatase</fullName>
    </alternativeName>
</protein>
<organism>
    <name type="scientific">Salmonella typhi</name>
    <dbReference type="NCBI Taxonomy" id="90370"/>
    <lineage>
        <taxon>Bacteria</taxon>
        <taxon>Pseudomonadati</taxon>
        <taxon>Pseudomonadota</taxon>
        <taxon>Gammaproteobacteria</taxon>
        <taxon>Enterobacterales</taxon>
        <taxon>Enterobacteriaceae</taxon>
        <taxon>Salmonella</taxon>
    </lineage>
</organism>
<gene>
    <name type="primary">apaH</name>
    <name type="ordered locus">STY0103</name>
    <name type="ordered locus">t0091</name>
</gene>